<evidence type="ECO:0000255" key="1">
    <source>
        <dbReference type="HAMAP-Rule" id="MF_02121"/>
    </source>
</evidence>
<evidence type="ECO:0000305" key="2"/>
<sequence>MSRVKVAVLGATGSVGQRFIQLLDHHPFFEVTHLCASENSAGKTYGEVMKTRWKISSDIPAYAKNLVITTPDPAKTKDVVLAFSGLDSNVAGEVEKNYANAGIHIISNSKNHRMDPTVPILSAEVNSSHLEVLTSQKTKGKIITNSNCTIMGVTISLKPLLDRFGIESVMLFSMQAISGAGYPGVPTMDILGNVIPHIGGEEEKAEIEPLKCLGKVENGKILHADFSISAHCNRVPVFDGHTVCVSVKFKKKPSREEIISSWKDFSGEPQTLGLPLAPNPVILFREEEDRPQPRLDLDTGKGMTTVIGRLRPDPILDWKYVVLSHNTIRGAAGAALLNAELLYKKKFLG</sequence>
<name>DHAS_LEPIN</name>
<feature type="chain" id="PRO_0000141380" description="Aspartate-semialdehyde dehydrogenase">
    <location>
        <begin position="1"/>
        <end position="349"/>
    </location>
</feature>
<feature type="active site" description="Acyl-thioester intermediate" evidence="1">
    <location>
        <position position="148"/>
    </location>
</feature>
<feature type="active site" description="Proton acceptor" evidence="1">
    <location>
        <position position="241"/>
    </location>
</feature>
<feature type="binding site" evidence="1">
    <location>
        <begin position="12"/>
        <end position="15"/>
    </location>
    <ligand>
        <name>NADP(+)</name>
        <dbReference type="ChEBI" id="CHEBI:58349"/>
    </ligand>
</feature>
<feature type="binding site" evidence="1">
    <location>
        <begin position="39"/>
        <end position="40"/>
    </location>
    <ligand>
        <name>NADP(+)</name>
        <dbReference type="ChEBI" id="CHEBI:58349"/>
    </ligand>
</feature>
<feature type="binding site" evidence="1">
    <location>
        <position position="113"/>
    </location>
    <ligand>
        <name>phosphate</name>
        <dbReference type="ChEBI" id="CHEBI:43474"/>
    </ligand>
</feature>
<feature type="binding site" evidence="1">
    <location>
        <position position="175"/>
    </location>
    <ligand>
        <name>substrate</name>
    </ligand>
</feature>
<feature type="binding site" evidence="1">
    <location>
        <begin position="178"/>
        <end position="179"/>
    </location>
    <ligand>
        <name>NADP(+)</name>
        <dbReference type="ChEBI" id="CHEBI:58349"/>
    </ligand>
</feature>
<feature type="binding site" evidence="1">
    <location>
        <position position="201"/>
    </location>
    <ligand>
        <name>substrate</name>
    </ligand>
</feature>
<feature type="binding site" evidence="1">
    <location>
        <position position="204"/>
    </location>
    <ligand>
        <name>phosphate</name>
        <dbReference type="ChEBI" id="CHEBI:43474"/>
    </ligand>
</feature>
<feature type="binding site" evidence="1">
    <location>
        <position position="234"/>
    </location>
    <ligand>
        <name>substrate</name>
    </ligand>
</feature>
<feature type="binding site" evidence="1">
    <location>
        <begin position="326"/>
        <end position="327"/>
    </location>
    <ligand>
        <name>NADP(+)</name>
        <dbReference type="ChEBI" id="CHEBI:58349"/>
    </ligand>
</feature>
<feature type="sequence conflict" description="In Ref. 1; AAB21985/AAA25262." evidence="2" ref="1">
    <original>V</original>
    <variation>I</variation>
    <location>
        <position position="31"/>
    </location>
</feature>
<comment type="function">
    <text evidence="1">Catalyzes the NADPH-dependent formation of L-aspartate-semialdehyde (L-ASA) by the reductive dephosphorylation of L-aspartyl-4-phosphate.</text>
</comment>
<comment type="catalytic activity">
    <reaction evidence="1">
        <text>L-aspartate 4-semialdehyde + phosphate + NADP(+) = 4-phospho-L-aspartate + NADPH + H(+)</text>
        <dbReference type="Rhea" id="RHEA:24284"/>
        <dbReference type="ChEBI" id="CHEBI:15378"/>
        <dbReference type="ChEBI" id="CHEBI:43474"/>
        <dbReference type="ChEBI" id="CHEBI:57535"/>
        <dbReference type="ChEBI" id="CHEBI:57783"/>
        <dbReference type="ChEBI" id="CHEBI:58349"/>
        <dbReference type="ChEBI" id="CHEBI:537519"/>
        <dbReference type="EC" id="1.2.1.11"/>
    </reaction>
</comment>
<comment type="pathway">
    <text evidence="1">Amino-acid biosynthesis; L-lysine biosynthesis via DAP pathway; (S)-tetrahydrodipicolinate from L-aspartate: step 2/4.</text>
</comment>
<comment type="pathway">
    <text evidence="1">Amino-acid biosynthesis; L-methionine biosynthesis via de novo pathway; L-homoserine from L-aspartate: step 2/3.</text>
</comment>
<comment type="pathway">
    <text evidence="1">Amino-acid biosynthesis; L-threonine biosynthesis; L-threonine from L-aspartate: step 2/5.</text>
</comment>
<comment type="subunit">
    <text evidence="1">Homodimer.</text>
</comment>
<comment type="similarity">
    <text evidence="1">Belongs to the aspartate-semialdehyde dehydrogenase family.</text>
</comment>
<accession>P41394</accession>
<reference key="1">
    <citation type="journal article" date="1992" name="J. Gen. Microbiol.">
        <title>Cloning of dapD, aroD and asd of Leptospira interrogans serovar icterohaemorrhagiae, and nucleotide sequence of the asd gene.</title>
        <authorList>
            <person name="Baril C."/>
            <person name="Richaud C."/>
            <person name="Fourni E."/>
            <person name="Baranton G."/>
            <person name="Saint-Girons I."/>
        </authorList>
    </citation>
    <scope>NUCLEOTIDE SEQUENCE [GENOMIC DNA]</scope>
    <source>
        <strain>Serogroup Icterohaemorrhagiae</strain>
    </source>
</reference>
<reference key="2">
    <citation type="journal article" date="2003" name="Nature">
        <title>Unique physiological and pathogenic features of Leptospira interrogans revealed by whole-genome sequencing.</title>
        <authorList>
            <person name="Ren S.-X."/>
            <person name="Fu G."/>
            <person name="Jiang X.-G."/>
            <person name="Zeng R."/>
            <person name="Miao Y.-G."/>
            <person name="Xu H."/>
            <person name="Zhang Y.-X."/>
            <person name="Xiong H."/>
            <person name="Lu G."/>
            <person name="Lu L.-F."/>
            <person name="Jiang H.-Q."/>
            <person name="Jia J."/>
            <person name="Tu Y.-F."/>
            <person name="Jiang J.-X."/>
            <person name="Gu W.-Y."/>
            <person name="Zhang Y.-Q."/>
            <person name="Cai Z."/>
            <person name="Sheng H.-H."/>
            <person name="Yin H.-F."/>
            <person name="Zhang Y."/>
            <person name="Zhu G.-F."/>
            <person name="Wan M."/>
            <person name="Huang H.-L."/>
            <person name="Qian Z."/>
            <person name="Wang S.-Y."/>
            <person name="Ma W."/>
            <person name="Yao Z.-J."/>
            <person name="Shen Y."/>
            <person name="Qiang B.-Q."/>
            <person name="Xia Q.-C."/>
            <person name="Guo X.-K."/>
            <person name="Danchin A."/>
            <person name="Saint Girons I."/>
            <person name="Somerville R.L."/>
            <person name="Wen Y.-M."/>
            <person name="Shi M.-H."/>
            <person name="Chen Z."/>
            <person name="Xu J.-G."/>
            <person name="Zhao G.-P."/>
        </authorList>
    </citation>
    <scope>NUCLEOTIDE SEQUENCE [LARGE SCALE GENOMIC DNA]</scope>
    <source>
        <strain>56601</strain>
    </source>
</reference>
<gene>
    <name evidence="1" type="primary">asd</name>
    <name type="ordered locus">LB_355</name>
</gene>
<organism>
    <name type="scientific">Leptospira interrogans serogroup Icterohaemorrhagiae serovar Lai (strain 56601)</name>
    <dbReference type="NCBI Taxonomy" id="189518"/>
    <lineage>
        <taxon>Bacteria</taxon>
        <taxon>Pseudomonadati</taxon>
        <taxon>Spirochaetota</taxon>
        <taxon>Spirochaetia</taxon>
        <taxon>Leptospirales</taxon>
        <taxon>Leptospiraceae</taxon>
        <taxon>Leptospira</taxon>
    </lineage>
</organism>
<proteinExistence type="inferred from homology"/>
<dbReference type="EC" id="1.2.1.11" evidence="1"/>
<dbReference type="EMBL" id="S92223">
    <property type="protein sequence ID" value="AAB21985.1"/>
    <property type="molecule type" value="Genomic_DNA"/>
</dbReference>
<dbReference type="EMBL" id="M77500">
    <property type="protein sequence ID" value="AAA25262.1"/>
    <property type="molecule type" value="Genomic_DNA"/>
</dbReference>
<dbReference type="EMBL" id="AE010301">
    <property type="protein sequence ID" value="AAN51914.1"/>
    <property type="molecule type" value="Genomic_DNA"/>
</dbReference>
<dbReference type="PIR" id="A44846">
    <property type="entry name" value="A44846"/>
</dbReference>
<dbReference type="RefSeq" id="NP_714899.1">
    <property type="nucleotide sequence ID" value="NC_004343.2"/>
</dbReference>
<dbReference type="RefSeq" id="WP_000092012.1">
    <property type="nucleotide sequence ID" value="NC_004343.2"/>
</dbReference>
<dbReference type="SMR" id="P41394"/>
<dbReference type="FunCoup" id="P41394">
    <property type="interactions" value="440"/>
</dbReference>
<dbReference type="STRING" id="189518.LB_355"/>
<dbReference type="PaxDb" id="189518-LB_355"/>
<dbReference type="EnsemblBacteria" id="AAN51914">
    <property type="protein sequence ID" value="AAN51914"/>
    <property type="gene ID" value="LB_355"/>
</dbReference>
<dbReference type="KEGG" id="lil:LB_355"/>
<dbReference type="PATRIC" id="fig|189518.3.peg.4670"/>
<dbReference type="HOGENOM" id="CLU_049966_1_0_12"/>
<dbReference type="InParanoid" id="P41394"/>
<dbReference type="OrthoDB" id="9805684at2"/>
<dbReference type="UniPathway" id="UPA00034">
    <property type="reaction ID" value="UER00016"/>
</dbReference>
<dbReference type="UniPathway" id="UPA00050">
    <property type="reaction ID" value="UER00463"/>
</dbReference>
<dbReference type="UniPathway" id="UPA00051">
    <property type="reaction ID" value="UER00464"/>
</dbReference>
<dbReference type="Proteomes" id="UP000001408">
    <property type="component" value="Chromosome II"/>
</dbReference>
<dbReference type="GO" id="GO:0004073">
    <property type="term" value="F:aspartate-semialdehyde dehydrogenase activity"/>
    <property type="evidence" value="ECO:0000318"/>
    <property type="project" value="GO_Central"/>
</dbReference>
<dbReference type="GO" id="GO:0051287">
    <property type="term" value="F:NAD binding"/>
    <property type="evidence" value="ECO:0007669"/>
    <property type="project" value="InterPro"/>
</dbReference>
<dbReference type="GO" id="GO:0050661">
    <property type="term" value="F:NADP binding"/>
    <property type="evidence" value="ECO:0007669"/>
    <property type="project" value="UniProtKB-UniRule"/>
</dbReference>
<dbReference type="GO" id="GO:0046983">
    <property type="term" value="F:protein dimerization activity"/>
    <property type="evidence" value="ECO:0007669"/>
    <property type="project" value="InterPro"/>
</dbReference>
<dbReference type="GO" id="GO:0071266">
    <property type="term" value="P:'de novo' L-methionine biosynthetic process"/>
    <property type="evidence" value="ECO:0007669"/>
    <property type="project" value="UniProtKB-UniRule"/>
</dbReference>
<dbReference type="GO" id="GO:0019877">
    <property type="term" value="P:diaminopimelate biosynthetic process"/>
    <property type="evidence" value="ECO:0007669"/>
    <property type="project" value="UniProtKB-UniRule"/>
</dbReference>
<dbReference type="GO" id="GO:0009089">
    <property type="term" value="P:lysine biosynthetic process via diaminopimelate"/>
    <property type="evidence" value="ECO:0007669"/>
    <property type="project" value="UniProtKB-UniRule"/>
</dbReference>
<dbReference type="GO" id="GO:0009086">
    <property type="term" value="P:methionine biosynthetic process"/>
    <property type="evidence" value="ECO:0000318"/>
    <property type="project" value="GO_Central"/>
</dbReference>
<dbReference type="GO" id="GO:0009088">
    <property type="term" value="P:threonine biosynthetic process"/>
    <property type="evidence" value="ECO:0000318"/>
    <property type="project" value="GO_Central"/>
</dbReference>
<dbReference type="CDD" id="cd18130">
    <property type="entry name" value="ASADH_C_arch_fung_like"/>
    <property type="match status" value="1"/>
</dbReference>
<dbReference type="CDD" id="cd02315">
    <property type="entry name" value="ScASADH_like_N"/>
    <property type="match status" value="1"/>
</dbReference>
<dbReference type="FunFam" id="3.40.50.720:FF:000411">
    <property type="entry name" value="Aspartate-semialdehyde dehydrogenase"/>
    <property type="match status" value="1"/>
</dbReference>
<dbReference type="FunFam" id="3.30.360.10:FF:000016">
    <property type="entry name" value="Probable aspartate-semialdehyde dehydrogenase"/>
    <property type="match status" value="1"/>
</dbReference>
<dbReference type="Gene3D" id="3.30.360.10">
    <property type="entry name" value="Dihydrodipicolinate Reductase, domain 2"/>
    <property type="match status" value="1"/>
</dbReference>
<dbReference type="Gene3D" id="3.40.50.720">
    <property type="entry name" value="NAD(P)-binding Rossmann-like Domain"/>
    <property type="match status" value="1"/>
</dbReference>
<dbReference type="HAMAP" id="MF_02121">
    <property type="entry name" value="ASADH"/>
    <property type="match status" value="1"/>
</dbReference>
<dbReference type="InterPro" id="IPR051823">
    <property type="entry name" value="ASADH-related"/>
</dbReference>
<dbReference type="InterPro" id="IPR000319">
    <property type="entry name" value="Asp-semialdehyde_DH_CS"/>
</dbReference>
<dbReference type="InterPro" id="IPR005676">
    <property type="entry name" value="Asp_semi-ald_DH_pep-lack"/>
</dbReference>
<dbReference type="InterPro" id="IPR012080">
    <property type="entry name" value="Asp_semialdehyde_DH"/>
</dbReference>
<dbReference type="InterPro" id="IPR036291">
    <property type="entry name" value="NAD(P)-bd_dom_sf"/>
</dbReference>
<dbReference type="InterPro" id="IPR000534">
    <property type="entry name" value="Semialdehyde_DH_NAD-bd"/>
</dbReference>
<dbReference type="InterPro" id="IPR012280">
    <property type="entry name" value="Semialdhyde_DH_dimer_dom"/>
</dbReference>
<dbReference type="NCBIfam" id="TIGR00978">
    <property type="entry name" value="asd_EA"/>
    <property type="match status" value="1"/>
</dbReference>
<dbReference type="NCBIfam" id="NF006416">
    <property type="entry name" value="PRK08664.1"/>
    <property type="match status" value="1"/>
</dbReference>
<dbReference type="PANTHER" id="PTHR46718">
    <property type="entry name" value="ASPARTATE-SEMIALDEHYDE DEHYDROGENASE"/>
    <property type="match status" value="1"/>
</dbReference>
<dbReference type="PANTHER" id="PTHR46718:SF1">
    <property type="entry name" value="ASPARTATE-SEMIALDEHYDE DEHYDROGENASE"/>
    <property type="match status" value="1"/>
</dbReference>
<dbReference type="Pfam" id="PF01118">
    <property type="entry name" value="Semialdhyde_dh"/>
    <property type="match status" value="1"/>
</dbReference>
<dbReference type="Pfam" id="PF02774">
    <property type="entry name" value="Semialdhyde_dhC"/>
    <property type="match status" value="1"/>
</dbReference>
<dbReference type="PIRSF" id="PIRSF000148">
    <property type="entry name" value="ASA_dh"/>
    <property type="match status" value="1"/>
</dbReference>
<dbReference type="SMART" id="SM00859">
    <property type="entry name" value="Semialdhyde_dh"/>
    <property type="match status" value="1"/>
</dbReference>
<dbReference type="SUPFAM" id="SSF55347">
    <property type="entry name" value="Glyceraldehyde-3-phosphate dehydrogenase-like, C-terminal domain"/>
    <property type="match status" value="1"/>
</dbReference>
<dbReference type="SUPFAM" id="SSF51735">
    <property type="entry name" value="NAD(P)-binding Rossmann-fold domains"/>
    <property type="match status" value="1"/>
</dbReference>
<dbReference type="PROSITE" id="PS01103">
    <property type="entry name" value="ASD"/>
    <property type="match status" value="1"/>
</dbReference>
<keyword id="KW-0028">Amino-acid biosynthesis</keyword>
<keyword id="KW-0220">Diaminopimelate biosynthesis</keyword>
<keyword id="KW-0457">Lysine biosynthesis</keyword>
<keyword id="KW-0486">Methionine biosynthesis</keyword>
<keyword id="KW-0521">NADP</keyword>
<keyword id="KW-0560">Oxidoreductase</keyword>
<keyword id="KW-1185">Reference proteome</keyword>
<keyword id="KW-0791">Threonine biosynthesis</keyword>
<protein>
    <recommendedName>
        <fullName evidence="1">Aspartate-semialdehyde dehydrogenase</fullName>
        <shortName evidence="1">ASA dehydrogenase</shortName>
        <shortName evidence="1">ASADH</shortName>
        <ecNumber evidence="1">1.2.1.11</ecNumber>
    </recommendedName>
    <alternativeName>
        <fullName evidence="1">Aspartate-beta-semialdehyde dehydrogenase</fullName>
    </alternativeName>
</protein>